<comment type="function">
    <text evidence="1">One of the primary rRNA binding proteins, it binds directly to 16S rRNA central domain where it helps coordinate assembly of the platform of the 30S subunit.</text>
</comment>
<comment type="subunit">
    <text evidence="1">Part of the 30S ribosomal subunit.</text>
</comment>
<comment type="subcellular location">
    <subcellularLocation>
        <location>Plastid</location>
        <location>Chloroplast</location>
    </subcellularLocation>
</comment>
<comment type="similarity">
    <text evidence="2">Belongs to the universal ribosomal protein uS8 family.</text>
</comment>
<accession>Q0ZIY3</accession>
<proteinExistence type="inferred from homology"/>
<sequence length="134" mass="15671">MGRDTIADIITSIRNVDMDRKVTVRIASTNITENIVKILLREGFIENVRKHQESNKYFLVLTLRHRRNRKGTYRTILNLKRISRPGLRIYSNYQRIPRILGGMGIVILSTSRGIMTDREARLERIGGEILCYIW</sequence>
<organism>
    <name type="scientific">Vitis vinifera</name>
    <name type="common">Grape</name>
    <dbReference type="NCBI Taxonomy" id="29760"/>
    <lineage>
        <taxon>Eukaryota</taxon>
        <taxon>Viridiplantae</taxon>
        <taxon>Streptophyta</taxon>
        <taxon>Embryophyta</taxon>
        <taxon>Tracheophyta</taxon>
        <taxon>Spermatophyta</taxon>
        <taxon>Magnoliopsida</taxon>
        <taxon>eudicotyledons</taxon>
        <taxon>Gunneridae</taxon>
        <taxon>Pentapetalae</taxon>
        <taxon>rosids</taxon>
        <taxon>Vitales</taxon>
        <taxon>Vitaceae</taxon>
        <taxon>Viteae</taxon>
        <taxon>Vitis</taxon>
    </lineage>
</organism>
<reference key="1">
    <citation type="journal article" date="2006" name="BMC Evol. Biol.">
        <title>Phylogenetic analyses of Vitis (Vitaceae) based on complete chloroplast genome sequences: effects of taxon sampling and phylogenetic methods on resolving relationships among rosids.</title>
        <authorList>
            <person name="Jansen R.K."/>
            <person name="Kaittanis C."/>
            <person name="Lee S.-B."/>
            <person name="Saski C."/>
            <person name="Tomkins J."/>
            <person name="Alverson A.J."/>
            <person name="Daniell H."/>
        </authorList>
    </citation>
    <scope>NUCLEOTIDE SEQUENCE [LARGE SCALE GENOMIC DNA]</scope>
    <source>
        <strain>cv. Maxxa</strain>
    </source>
</reference>
<feature type="chain" id="PRO_0000276734" description="Small ribosomal subunit protein uS8c">
    <location>
        <begin position="1"/>
        <end position="134"/>
    </location>
</feature>
<evidence type="ECO:0000250" key="1"/>
<evidence type="ECO:0000305" key="2"/>
<protein>
    <recommendedName>
        <fullName evidence="2">Small ribosomal subunit protein uS8c</fullName>
    </recommendedName>
    <alternativeName>
        <fullName>30S ribosomal protein S8, chloroplastic</fullName>
    </alternativeName>
</protein>
<gene>
    <name type="primary">rps8</name>
</gene>
<dbReference type="EMBL" id="DQ424856">
    <property type="protein sequence ID" value="ABE47569.1"/>
    <property type="molecule type" value="Genomic_DNA"/>
</dbReference>
<dbReference type="RefSeq" id="YP_567113.1">
    <property type="nucleotide sequence ID" value="NC_007957.1"/>
</dbReference>
<dbReference type="SMR" id="Q0ZIY3"/>
<dbReference type="FunCoup" id="Q0ZIY3">
    <property type="interactions" value="152"/>
</dbReference>
<dbReference type="STRING" id="29760.Q0ZIY3"/>
<dbReference type="GeneID" id="4025135"/>
<dbReference type="KEGG" id="vvi:4025135"/>
<dbReference type="InParanoid" id="Q0ZIY3"/>
<dbReference type="OrthoDB" id="829096at71240"/>
<dbReference type="Proteomes" id="UP000009183">
    <property type="component" value="Chloroplast"/>
</dbReference>
<dbReference type="GO" id="GO:0009507">
    <property type="term" value="C:chloroplast"/>
    <property type="evidence" value="ECO:0007669"/>
    <property type="project" value="UniProtKB-SubCell"/>
</dbReference>
<dbReference type="GO" id="GO:1990904">
    <property type="term" value="C:ribonucleoprotein complex"/>
    <property type="evidence" value="ECO:0007669"/>
    <property type="project" value="UniProtKB-KW"/>
</dbReference>
<dbReference type="GO" id="GO:0005840">
    <property type="term" value="C:ribosome"/>
    <property type="evidence" value="ECO:0007669"/>
    <property type="project" value="UniProtKB-KW"/>
</dbReference>
<dbReference type="GO" id="GO:0019843">
    <property type="term" value="F:rRNA binding"/>
    <property type="evidence" value="ECO:0007669"/>
    <property type="project" value="UniProtKB-UniRule"/>
</dbReference>
<dbReference type="GO" id="GO:0003735">
    <property type="term" value="F:structural constituent of ribosome"/>
    <property type="evidence" value="ECO:0000318"/>
    <property type="project" value="GO_Central"/>
</dbReference>
<dbReference type="GO" id="GO:0006412">
    <property type="term" value="P:translation"/>
    <property type="evidence" value="ECO:0007669"/>
    <property type="project" value="UniProtKB-UniRule"/>
</dbReference>
<dbReference type="FunFam" id="3.30.1490.10:FF:000001">
    <property type="entry name" value="30S ribosomal protein S8"/>
    <property type="match status" value="1"/>
</dbReference>
<dbReference type="FunFam" id="3.30.1370.30:FF:000004">
    <property type="entry name" value="30S ribosomal protein S8, chloroplastic"/>
    <property type="match status" value="1"/>
</dbReference>
<dbReference type="Gene3D" id="3.30.1370.30">
    <property type="match status" value="1"/>
</dbReference>
<dbReference type="Gene3D" id="3.30.1490.10">
    <property type="match status" value="1"/>
</dbReference>
<dbReference type="HAMAP" id="MF_01302_B">
    <property type="entry name" value="Ribosomal_uS8_B"/>
    <property type="match status" value="1"/>
</dbReference>
<dbReference type="InterPro" id="IPR000630">
    <property type="entry name" value="Ribosomal_uS8"/>
</dbReference>
<dbReference type="InterPro" id="IPR047863">
    <property type="entry name" value="Ribosomal_uS8_CS"/>
</dbReference>
<dbReference type="InterPro" id="IPR035987">
    <property type="entry name" value="Ribosomal_uS8_sf"/>
</dbReference>
<dbReference type="NCBIfam" id="NF001109">
    <property type="entry name" value="PRK00136.1"/>
    <property type="match status" value="1"/>
</dbReference>
<dbReference type="PANTHER" id="PTHR11758">
    <property type="entry name" value="40S RIBOSOMAL PROTEIN S15A"/>
    <property type="match status" value="1"/>
</dbReference>
<dbReference type="Pfam" id="PF00410">
    <property type="entry name" value="Ribosomal_S8"/>
    <property type="match status" value="1"/>
</dbReference>
<dbReference type="SUPFAM" id="SSF56047">
    <property type="entry name" value="Ribosomal protein S8"/>
    <property type="match status" value="1"/>
</dbReference>
<dbReference type="PROSITE" id="PS00053">
    <property type="entry name" value="RIBOSOMAL_S8"/>
    <property type="match status" value="1"/>
</dbReference>
<geneLocation type="chloroplast"/>
<keyword id="KW-0150">Chloroplast</keyword>
<keyword id="KW-0934">Plastid</keyword>
<keyword id="KW-1185">Reference proteome</keyword>
<keyword id="KW-0687">Ribonucleoprotein</keyword>
<keyword id="KW-0689">Ribosomal protein</keyword>
<keyword id="KW-0694">RNA-binding</keyword>
<keyword id="KW-0699">rRNA-binding</keyword>
<name>RR8_VITVI</name>